<gene>
    <name type="primary">allS</name>
    <name type="ordered locus">STM0514</name>
</gene>
<comment type="function">
    <text evidence="1">Positive regulator essential for the expression of allD operon. Binds to the allD promoter (By similarity).</text>
</comment>
<comment type="similarity">
    <text evidence="3">Belongs to the LysR transcriptional regulatory family.</text>
</comment>
<name>ALLS_SALTY</name>
<sequence>MFDPETLRTFISVAETGSFSKAAERLCKTTATISYRIKLLEENTGVGLFFRTTRSVSLTAAGSHLLSQAKDWLAWLDSMPDELRQVNDGVERQVNIVVNNLLYSPQAVASLLSWLNARYPFTQFHFSRQIYMGVWDSLLYEGFSLAIGVTGTEPLANTFMLDPLGSVQWRFVMSADHPLAHVSGPLTEAQLRRFPAINIEDSARTLTKRVAWRLPGQKEIIVPDMETKIAAHLAGVGIGFVPQPLCQTLIDKNELVSCTIPTMRPPSPLSLAWHKFGGGKAVEDIVKLFTQRQPEIAGFLSIFNTVRC</sequence>
<accession>Q9S4Y7</accession>
<reference key="1">
    <citation type="journal article" date="2001" name="Nature">
        <title>Complete genome sequence of Salmonella enterica serovar Typhimurium LT2.</title>
        <authorList>
            <person name="McClelland M."/>
            <person name="Sanderson K.E."/>
            <person name="Spieth J."/>
            <person name="Clifton S.W."/>
            <person name="Latreille P."/>
            <person name="Courtney L."/>
            <person name="Porwollik S."/>
            <person name="Ali J."/>
            <person name="Dante M."/>
            <person name="Du F."/>
            <person name="Hou S."/>
            <person name="Layman D."/>
            <person name="Leonard S."/>
            <person name="Nguyen C."/>
            <person name="Scott K."/>
            <person name="Holmes A."/>
            <person name="Grewal N."/>
            <person name="Mulvaney E."/>
            <person name="Ryan E."/>
            <person name="Sun H."/>
            <person name="Florea L."/>
            <person name="Miller W."/>
            <person name="Stoneking T."/>
            <person name="Nhan M."/>
            <person name="Waterston R."/>
            <person name="Wilson R.K."/>
        </authorList>
    </citation>
    <scope>NUCLEOTIDE SEQUENCE [LARGE SCALE GENOMIC DNA]</scope>
    <source>
        <strain>LT2 / SGSC1412 / ATCC 700720</strain>
    </source>
</reference>
<proteinExistence type="inferred from homology"/>
<evidence type="ECO:0000250" key="1"/>
<evidence type="ECO:0000255" key="2">
    <source>
        <dbReference type="PROSITE-ProRule" id="PRU00253"/>
    </source>
</evidence>
<evidence type="ECO:0000305" key="3"/>
<organism>
    <name type="scientific">Salmonella typhimurium (strain LT2 / SGSC1412 / ATCC 700720)</name>
    <dbReference type="NCBI Taxonomy" id="99287"/>
    <lineage>
        <taxon>Bacteria</taxon>
        <taxon>Pseudomonadati</taxon>
        <taxon>Pseudomonadota</taxon>
        <taxon>Gammaproteobacteria</taxon>
        <taxon>Enterobacterales</taxon>
        <taxon>Enterobacteriaceae</taxon>
        <taxon>Salmonella</taxon>
    </lineage>
</organism>
<feature type="chain" id="PRO_0000312814" description="HTH-type transcriptional activator AllS">
    <location>
        <begin position="1"/>
        <end position="308"/>
    </location>
</feature>
<feature type="domain" description="HTH lysR-type" evidence="2">
    <location>
        <begin position="2"/>
        <end position="59"/>
    </location>
</feature>
<feature type="DNA-binding region" description="H-T-H motif" evidence="2">
    <location>
        <begin position="19"/>
        <end position="38"/>
    </location>
</feature>
<dbReference type="EMBL" id="AE006468">
    <property type="protein sequence ID" value="AAL19468.1"/>
    <property type="molecule type" value="Genomic_DNA"/>
</dbReference>
<dbReference type="RefSeq" id="WP_000460169.1">
    <property type="nucleotide sequence ID" value="NC_003197.2"/>
</dbReference>
<dbReference type="SMR" id="Q9S4Y7"/>
<dbReference type="STRING" id="99287.STM0514"/>
<dbReference type="PaxDb" id="99287-STM0514"/>
<dbReference type="DNASU" id="1252034"/>
<dbReference type="KEGG" id="stm:STM0514"/>
<dbReference type="PATRIC" id="fig|99287.12.peg.548"/>
<dbReference type="HOGENOM" id="CLU_039613_35_1_6"/>
<dbReference type="OMA" id="VYMGVWD"/>
<dbReference type="PhylomeDB" id="Q9S4Y7"/>
<dbReference type="BioCyc" id="SENT99287:STM0514-MONOMER"/>
<dbReference type="Proteomes" id="UP000001014">
    <property type="component" value="Chromosome"/>
</dbReference>
<dbReference type="GO" id="GO:0003677">
    <property type="term" value="F:DNA binding"/>
    <property type="evidence" value="ECO:0007669"/>
    <property type="project" value="UniProtKB-KW"/>
</dbReference>
<dbReference type="GO" id="GO:0003700">
    <property type="term" value="F:DNA-binding transcription factor activity"/>
    <property type="evidence" value="ECO:0000318"/>
    <property type="project" value="GO_Central"/>
</dbReference>
<dbReference type="GO" id="GO:0006355">
    <property type="term" value="P:regulation of DNA-templated transcription"/>
    <property type="evidence" value="ECO:0000318"/>
    <property type="project" value="GO_Central"/>
</dbReference>
<dbReference type="FunFam" id="3.40.190.290:FF:000005">
    <property type="entry name" value="HTH-type transcriptional activator AllS"/>
    <property type="match status" value="1"/>
</dbReference>
<dbReference type="FunFam" id="1.10.10.10:FF:000001">
    <property type="entry name" value="LysR family transcriptional regulator"/>
    <property type="match status" value="1"/>
</dbReference>
<dbReference type="Gene3D" id="3.40.190.290">
    <property type="match status" value="1"/>
</dbReference>
<dbReference type="Gene3D" id="1.10.10.10">
    <property type="entry name" value="Winged helix-like DNA-binding domain superfamily/Winged helix DNA-binding domain"/>
    <property type="match status" value="1"/>
</dbReference>
<dbReference type="InterPro" id="IPR050176">
    <property type="entry name" value="LTTR"/>
</dbReference>
<dbReference type="InterPro" id="IPR005119">
    <property type="entry name" value="LysR_subst-bd"/>
</dbReference>
<dbReference type="InterPro" id="IPR000847">
    <property type="entry name" value="Tscrpt_reg_HTH_LysR"/>
</dbReference>
<dbReference type="InterPro" id="IPR036388">
    <property type="entry name" value="WH-like_DNA-bd_sf"/>
</dbReference>
<dbReference type="InterPro" id="IPR036390">
    <property type="entry name" value="WH_DNA-bd_sf"/>
</dbReference>
<dbReference type="NCBIfam" id="NF007501">
    <property type="entry name" value="PRK10094.1"/>
    <property type="match status" value="1"/>
</dbReference>
<dbReference type="PANTHER" id="PTHR30579:SF0">
    <property type="entry name" value="HTH-TYPE TRANSCRIPTIONAL ACTIVATOR ALLS"/>
    <property type="match status" value="1"/>
</dbReference>
<dbReference type="PANTHER" id="PTHR30579">
    <property type="entry name" value="TRANSCRIPTIONAL REGULATOR"/>
    <property type="match status" value="1"/>
</dbReference>
<dbReference type="Pfam" id="PF00126">
    <property type="entry name" value="HTH_1"/>
    <property type="match status" value="1"/>
</dbReference>
<dbReference type="Pfam" id="PF03466">
    <property type="entry name" value="LysR_substrate"/>
    <property type="match status" value="1"/>
</dbReference>
<dbReference type="SUPFAM" id="SSF53850">
    <property type="entry name" value="Periplasmic binding protein-like II"/>
    <property type="match status" value="1"/>
</dbReference>
<dbReference type="SUPFAM" id="SSF46785">
    <property type="entry name" value="Winged helix' DNA-binding domain"/>
    <property type="match status" value="1"/>
</dbReference>
<dbReference type="PROSITE" id="PS50931">
    <property type="entry name" value="HTH_LYSR"/>
    <property type="match status" value="1"/>
</dbReference>
<keyword id="KW-0010">Activator</keyword>
<keyword id="KW-0238">DNA-binding</keyword>
<keyword id="KW-1185">Reference proteome</keyword>
<keyword id="KW-0804">Transcription</keyword>
<keyword id="KW-0805">Transcription regulation</keyword>
<protein>
    <recommendedName>
        <fullName>HTH-type transcriptional activator AllS</fullName>
    </recommendedName>
</protein>